<reference key="1">
    <citation type="journal article" date="2009" name="Appl. Environ. Microbiol.">
        <title>Three genomes from the phylum Acidobacteria provide insight into the lifestyles of these microorganisms in soils.</title>
        <authorList>
            <person name="Ward N.L."/>
            <person name="Challacombe J.F."/>
            <person name="Janssen P.H."/>
            <person name="Henrissat B."/>
            <person name="Coutinho P.M."/>
            <person name="Wu M."/>
            <person name="Xie G."/>
            <person name="Haft D.H."/>
            <person name="Sait M."/>
            <person name="Badger J."/>
            <person name="Barabote R.D."/>
            <person name="Bradley B."/>
            <person name="Brettin T.S."/>
            <person name="Brinkac L.M."/>
            <person name="Bruce D."/>
            <person name="Creasy T."/>
            <person name="Daugherty S.C."/>
            <person name="Davidsen T.M."/>
            <person name="DeBoy R.T."/>
            <person name="Detter J.C."/>
            <person name="Dodson R.J."/>
            <person name="Durkin A.S."/>
            <person name="Ganapathy A."/>
            <person name="Gwinn-Giglio M."/>
            <person name="Han C.S."/>
            <person name="Khouri H."/>
            <person name="Kiss H."/>
            <person name="Kothari S.P."/>
            <person name="Madupu R."/>
            <person name="Nelson K.E."/>
            <person name="Nelson W.C."/>
            <person name="Paulsen I."/>
            <person name="Penn K."/>
            <person name="Ren Q."/>
            <person name="Rosovitz M.J."/>
            <person name="Selengut J.D."/>
            <person name="Shrivastava S."/>
            <person name="Sullivan S.A."/>
            <person name="Tapia R."/>
            <person name="Thompson L.S."/>
            <person name="Watkins K.L."/>
            <person name="Yang Q."/>
            <person name="Yu C."/>
            <person name="Zafar N."/>
            <person name="Zhou L."/>
            <person name="Kuske C.R."/>
        </authorList>
    </citation>
    <scope>NUCLEOTIDE SEQUENCE [LARGE SCALE GENOMIC DNA]</scope>
    <source>
        <strain>ATCC 51196 / DSM 11244 / BCRC 80197 / JCM 7670 / NBRC 15755 / NCIMB 13165 / 161</strain>
    </source>
</reference>
<protein>
    <recommendedName>
        <fullName evidence="1">Nucleoid-associated protein ACP_0492</fullName>
    </recommendedName>
</protein>
<keyword id="KW-0963">Cytoplasm</keyword>
<keyword id="KW-0238">DNA-binding</keyword>
<keyword id="KW-1185">Reference proteome</keyword>
<evidence type="ECO:0000255" key="1">
    <source>
        <dbReference type="HAMAP-Rule" id="MF_00274"/>
    </source>
</evidence>
<proteinExistence type="inferred from homology"/>
<sequence>MNPFKMQQMLSQAKEMQEQMQEKLAATVVEASSGGGAVSVKMNGKKELLKLTIDPAAVLSLSGANPDVEMLEDLITAAINEAGRRAEEILKSSMQGLLGGLNLPPGLF</sequence>
<feature type="chain" id="PRO_1000197636" description="Nucleoid-associated protein ACP_0492">
    <location>
        <begin position="1"/>
        <end position="108"/>
    </location>
</feature>
<accession>C1F0Z2</accession>
<name>Y492_ACIC5</name>
<dbReference type="EMBL" id="CP001472">
    <property type="protein sequence ID" value="ACO34281.1"/>
    <property type="molecule type" value="Genomic_DNA"/>
</dbReference>
<dbReference type="RefSeq" id="WP_012680883.1">
    <property type="nucleotide sequence ID" value="NC_012483.1"/>
</dbReference>
<dbReference type="SMR" id="C1F0Z2"/>
<dbReference type="FunCoup" id="C1F0Z2">
    <property type="interactions" value="400"/>
</dbReference>
<dbReference type="STRING" id="240015.ACP_0492"/>
<dbReference type="KEGG" id="aca:ACP_0492"/>
<dbReference type="eggNOG" id="COG0718">
    <property type="taxonomic scope" value="Bacteria"/>
</dbReference>
<dbReference type="HOGENOM" id="CLU_140930_2_1_0"/>
<dbReference type="InParanoid" id="C1F0Z2"/>
<dbReference type="OrthoDB" id="9795263at2"/>
<dbReference type="Proteomes" id="UP000002207">
    <property type="component" value="Chromosome"/>
</dbReference>
<dbReference type="GO" id="GO:0043590">
    <property type="term" value="C:bacterial nucleoid"/>
    <property type="evidence" value="ECO:0007669"/>
    <property type="project" value="UniProtKB-UniRule"/>
</dbReference>
<dbReference type="GO" id="GO:0005829">
    <property type="term" value="C:cytosol"/>
    <property type="evidence" value="ECO:0007669"/>
    <property type="project" value="TreeGrafter"/>
</dbReference>
<dbReference type="GO" id="GO:0003677">
    <property type="term" value="F:DNA binding"/>
    <property type="evidence" value="ECO:0007669"/>
    <property type="project" value="UniProtKB-UniRule"/>
</dbReference>
<dbReference type="Gene3D" id="3.30.1310.10">
    <property type="entry name" value="Nucleoid-associated protein YbaB-like domain"/>
    <property type="match status" value="1"/>
</dbReference>
<dbReference type="HAMAP" id="MF_00274">
    <property type="entry name" value="DNA_YbaB_EbfC"/>
    <property type="match status" value="1"/>
</dbReference>
<dbReference type="InterPro" id="IPR036894">
    <property type="entry name" value="YbaB-like_sf"/>
</dbReference>
<dbReference type="InterPro" id="IPR004401">
    <property type="entry name" value="YbaB/EbfC"/>
</dbReference>
<dbReference type="NCBIfam" id="TIGR00103">
    <property type="entry name" value="DNA_YbaB_EbfC"/>
    <property type="match status" value="1"/>
</dbReference>
<dbReference type="PANTHER" id="PTHR33449">
    <property type="entry name" value="NUCLEOID-ASSOCIATED PROTEIN YBAB"/>
    <property type="match status" value="1"/>
</dbReference>
<dbReference type="PANTHER" id="PTHR33449:SF1">
    <property type="entry name" value="NUCLEOID-ASSOCIATED PROTEIN YBAB"/>
    <property type="match status" value="1"/>
</dbReference>
<dbReference type="Pfam" id="PF02575">
    <property type="entry name" value="YbaB_DNA_bd"/>
    <property type="match status" value="1"/>
</dbReference>
<dbReference type="PIRSF" id="PIRSF004555">
    <property type="entry name" value="UCP004555"/>
    <property type="match status" value="1"/>
</dbReference>
<dbReference type="SUPFAM" id="SSF82607">
    <property type="entry name" value="YbaB-like"/>
    <property type="match status" value="1"/>
</dbReference>
<comment type="function">
    <text evidence="1">Binds to DNA and alters its conformation. May be involved in regulation of gene expression, nucleoid organization and DNA protection.</text>
</comment>
<comment type="subunit">
    <text evidence="1">Homodimer.</text>
</comment>
<comment type="subcellular location">
    <subcellularLocation>
        <location evidence="1">Cytoplasm</location>
        <location evidence="1">Nucleoid</location>
    </subcellularLocation>
</comment>
<comment type="similarity">
    <text evidence="1">Belongs to the YbaB/EbfC family.</text>
</comment>
<gene>
    <name type="ordered locus">ACP_0492</name>
</gene>
<organism>
    <name type="scientific">Acidobacterium capsulatum (strain ATCC 51196 / DSM 11244 / BCRC 80197 / JCM 7670 / NBRC 15755 / NCIMB 13165 / 161)</name>
    <dbReference type="NCBI Taxonomy" id="240015"/>
    <lineage>
        <taxon>Bacteria</taxon>
        <taxon>Pseudomonadati</taxon>
        <taxon>Acidobacteriota</taxon>
        <taxon>Terriglobia</taxon>
        <taxon>Terriglobales</taxon>
        <taxon>Acidobacteriaceae</taxon>
        <taxon>Acidobacterium</taxon>
    </lineage>
</organism>